<reference key="1">
    <citation type="journal article" date="2002" name="Nat. Genet.">
        <title>Genome sequence of the endocellular obligate symbiont of tsetse flies, Wigglesworthia glossinidia.</title>
        <authorList>
            <person name="Akman L."/>
            <person name="Yamashita A."/>
            <person name="Watanabe H."/>
            <person name="Oshima K."/>
            <person name="Shiba T."/>
            <person name="Hattori M."/>
            <person name="Aksoy S."/>
        </authorList>
    </citation>
    <scope>NUCLEOTIDE SEQUENCE [LARGE SCALE GENOMIC DNA]</scope>
</reference>
<gene>
    <name evidence="1" type="primary">nhaA</name>
    <name type="ordered locus">WIGBR2970</name>
</gene>
<accession>Q8D2Q7</accession>
<comment type="function">
    <text evidence="1">Na(+)/H(+) antiporter that extrudes sodium in exchange for external protons.</text>
</comment>
<comment type="catalytic activity">
    <reaction evidence="1">
        <text>Na(+)(in) + 2 H(+)(out) = Na(+)(out) + 2 H(+)(in)</text>
        <dbReference type="Rhea" id="RHEA:29251"/>
        <dbReference type="ChEBI" id="CHEBI:15378"/>
        <dbReference type="ChEBI" id="CHEBI:29101"/>
    </reaction>
    <physiologicalReaction direction="left-to-right" evidence="1">
        <dbReference type="Rhea" id="RHEA:29252"/>
    </physiologicalReaction>
</comment>
<comment type="subcellular location">
    <subcellularLocation>
        <location evidence="1">Cell membrane</location>
        <topology evidence="1">Multi-pass membrane protein</topology>
    </subcellularLocation>
</comment>
<comment type="similarity">
    <text evidence="1">Belongs to the NhaA Na(+)/H(+) (TC 2.A.33) antiporter family.</text>
</comment>
<organism>
    <name type="scientific">Wigglesworthia glossinidia brevipalpis</name>
    <dbReference type="NCBI Taxonomy" id="36870"/>
    <lineage>
        <taxon>Bacteria</taxon>
        <taxon>Pseudomonadati</taxon>
        <taxon>Pseudomonadota</taxon>
        <taxon>Gammaproteobacteria</taxon>
        <taxon>Enterobacterales</taxon>
        <taxon>Erwiniaceae</taxon>
        <taxon>Wigglesworthia</taxon>
    </lineage>
</organism>
<evidence type="ECO:0000255" key="1">
    <source>
        <dbReference type="HAMAP-Rule" id="MF_01844"/>
    </source>
</evidence>
<keyword id="KW-0050">Antiport</keyword>
<keyword id="KW-1003">Cell membrane</keyword>
<keyword id="KW-0406">Ion transport</keyword>
<keyword id="KW-0472">Membrane</keyword>
<keyword id="KW-1185">Reference proteome</keyword>
<keyword id="KW-0915">Sodium</keyword>
<keyword id="KW-0739">Sodium transport</keyword>
<keyword id="KW-0812">Transmembrane</keyword>
<keyword id="KW-1133">Transmembrane helix</keyword>
<keyword id="KW-0813">Transport</keyword>
<sequence length="396" mass="44620">MKKFFICKSKFFKNPTFSGLLLILFCFLAIFISNTNFWKTYNYIINYPLIKINTHDKNFSLTNIVNDILMTFFFLEIGIEIKHEMLVGSLKNKSRAILPGIAAIGGMIFPALIYNFITKEDSSISSGWAITVATDIAFAVGVLKILGHSIPHSLLIFLLSLAIFDDIGAILIIAFFYSNHIDQYMILLSTLVILTILSINYLRVTCIYIYIIFGILLWESIFLSGIHSTISGVILGILMPHSSYLSSSKYEKSMAFLKKSLSFLNKYFILPIFAFFNSGINFSNFENLSSSLLPFGIFFGLVLGKPIGVFLFSYLSVKFKLSKLPVGISFKEIAGISFLCGIGFTMSIFISNLAFQNINEKIIYIAKFSILISSIVSSVIGFLFLYFLYKKIKLKN</sequence>
<dbReference type="EMBL" id="BA000021">
    <property type="protein sequence ID" value="BAC24443.1"/>
    <property type="molecule type" value="Genomic_DNA"/>
</dbReference>
<dbReference type="SMR" id="Q8D2Q7"/>
<dbReference type="STRING" id="36870.gene:10368790"/>
<dbReference type="KEGG" id="wbr:nhaA"/>
<dbReference type="eggNOG" id="COG3004">
    <property type="taxonomic scope" value="Bacteria"/>
</dbReference>
<dbReference type="HOGENOM" id="CLU_015803_1_0_6"/>
<dbReference type="OrthoDB" id="9808135at2"/>
<dbReference type="Proteomes" id="UP000000562">
    <property type="component" value="Chromosome"/>
</dbReference>
<dbReference type="GO" id="GO:0005886">
    <property type="term" value="C:plasma membrane"/>
    <property type="evidence" value="ECO:0007669"/>
    <property type="project" value="UniProtKB-SubCell"/>
</dbReference>
<dbReference type="GO" id="GO:0015385">
    <property type="term" value="F:sodium:proton antiporter activity"/>
    <property type="evidence" value="ECO:0007669"/>
    <property type="project" value="TreeGrafter"/>
</dbReference>
<dbReference type="GO" id="GO:0006885">
    <property type="term" value="P:regulation of pH"/>
    <property type="evidence" value="ECO:0007669"/>
    <property type="project" value="InterPro"/>
</dbReference>
<dbReference type="Gene3D" id="1.20.1530.10">
    <property type="entry name" value="Na+/H+ antiporter like domain"/>
    <property type="match status" value="1"/>
</dbReference>
<dbReference type="HAMAP" id="MF_01844">
    <property type="entry name" value="NhaA"/>
    <property type="match status" value="1"/>
</dbReference>
<dbReference type="InterPro" id="IPR023171">
    <property type="entry name" value="Na/H_antiporter_dom_sf"/>
</dbReference>
<dbReference type="InterPro" id="IPR004670">
    <property type="entry name" value="NhaA"/>
</dbReference>
<dbReference type="NCBIfam" id="TIGR00773">
    <property type="entry name" value="NhaA"/>
    <property type="match status" value="1"/>
</dbReference>
<dbReference type="PANTHER" id="PTHR30341:SF0">
    <property type="entry name" value="NA(+)_H(+) ANTIPORTER NHAA"/>
    <property type="match status" value="1"/>
</dbReference>
<dbReference type="PANTHER" id="PTHR30341">
    <property type="entry name" value="SODIUM ION/PROTON ANTIPORTER NHAA-RELATED"/>
    <property type="match status" value="1"/>
</dbReference>
<dbReference type="Pfam" id="PF06965">
    <property type="entry name" value="Na_H_antiport_1"/>
    <property type="match status" value="1"/>
</dbReference>
<proteinExistence type="inferred from homology"/>
<name>NHAA_WIGBR</name>
<feature type="chain" id="PRO_0000334464" description="Na(+)/H(+) antiporter NhaA">
    <location>
        <begin position="1"/>
        <end position="396"/>
    </location>
</feature>
<feature type="transmembrane region" description="Helical" evidence="1">
    <location>
        <begin position="17"/>
        <end position="37"/>
    </location>
</feature>
<feature type="transmembrane region" description="Helical" evidence="1">
    <location>
        <begin position="59"/>
        <end position="79"/>
    </location>
</feature>
<feature type="transmembrane region" description="Helical" evidence="1">
    <location>
        <begin position="97"/>
        <end position="117"/>
    </location>
</feature>
<feature type="transmembrane region" description="Helical" evidence="1">
    <location>
        <begin position="127"/>
        <end position="147"/>
    </location>
</feature>
<feature type="transmembrane region" description="Helical" evidence="1">
    <location>
        <begin position="156"/>
        <end position="176"/>
    </location>
</feature>
<feature type="transmembrane region" description="Helical" evidence="1">
    <location>
        <begin position="181"/>
        <end position="201"/>
    </location>
</feature>
<feature type="transmembrane region" description="Helical" evidence="1">
    <location>
        <begin position="206"/>
        <end position="226"/>
    </location>
</feature>
<feature type="transmembrane region" description="Helical" evidence="1">
    <location>
        <begin position="260"/>
        <end position="280"/>
    </location>
</feature>
<feature type="transmembrane region" description="Helical" evidence="1">
    <location>
        <begin position="292"/>
        <end position="312"/>
    </location>
</feature>
<feature type="transmembrane region" description="Helical" evidence="1">
    <location>
        <begin position="333"/>
        <end position="353"/>
    </location>
</feature>
<feature type="transmembrane region" description="Helical" evidence="1">
    <location>
        <begin position="368"/>
        <end position="388"/>
    </location>
</feature>
<protein>
    <recommendedName>
        <fullName evidence="1">Na(+)/H(+) antiporter NhaA</fullName>
    </recommendedName>
    <alternativeName>
        <fullName evidence="1">Sodium/proton antiporter NhaA</fullName>
    </alternativeName>
</protein>